<feature type="chain" id="PRO_1000080054" description="Integration host factor subunit beta">
    <location>
        <begin position="1"/>
        <end position="95"/>
    </location>
</feature>
<feature type="region of interest" description="Disordered" evidence="2">
    <location>
        <begin position="56"/>
        <end position="76"/>
    </location>
</feature>
<evidence type="ECO:0000255" key="1">
    <source>
        <dbReference type="HAMAP-Rule" id="MF_00381"/>
    </source>
</evidence>
<evidence type="ECO:0000256" key="2">
    <source>
        <dbReference type="SAM" id="MobiDB-lite"/>
    </source>
</evidence>
<reference key="1">
    <citation type="submission" date="2007-08" db="EMBL/GenBank/DDBJ databases">
        <title>Complete sequence of Shewanella sediminis HAW-EB3.</title>
        <authorList>
            <consortium name="US DOE Joint Genome Institute"/>
            <person name="Copeland A."/>
            <person name="Lucas S."/>
            <person name="Lapidus A."/>
            <person name="Barry K."/>
            <person name="Glavina del Rio T."/>
            <person name="Dalin E."/>
            <person name="Tice H."/>
            <person name="Pitluck S."/>
            <person name="Chertkov O."/>
            <person name="Brettin T."/>
            <person name="Bruce D."/>
            <person name="Detter J.C."/>
            <person name="Han C."/>
            <person name="Schmutz J."/>
            <person name="Larimer F."/>
            <person name="Land M."/>
            <person name="Hauser L."/>
            <person name="Kyrpides N."/>
            <person name="Kim E."/>
            <person name="Zhao J.-S."/>
            <person name="Richardson P."/>
        </authorList>
    </citation>
    <scope>NUCLEOTIDE SEQUENCE [LARGE SCALE GENOMIC DNA]</scope>
    <source>
        <strain>HAW-EB3</strain>
    </source>
</reference>
<proteinExistence type="inferred from homology"/>
<protein>
    <recommendedName>
        <fullName evidence="1">Integration host factor subunit beta</fullName>
        <shortName evidence="1">IHF-beta</shortName>
    </recommendedName>
</protein>
<sequence>MTKSELIEKLATRQSQMSAKEVESAIKEMLEQMAQTLEGGDRIEIRGFGSFSLHFRAPRTGRNPKTGTSVDLDGKYVPHFKPGKELRERVDAINA</sequence>
<accession>A8FVN3</accession>
<organism>
    <name type="scientific">Shewanella sediminis (strain HAW-EB3)</name>
    <dbReference type="NCBI Taxonomy" id="425104"/>
    <lineage>
        <taxon>Bacteria</taxon>
        <taxon>Pseudomonadati</taxon>
        <taxon>Pseudomonadota</taxon>
        <taxon>Gammaproteobacteria</taxon>
        <taxon>Alteromonadales</taxon>
        <taxon>Shewanellaceae</taxon>
        <taxon>Shewanella</taxon>
    </lineage>
</organism>
<comment type="function">
    <text evidence="1">This protein is one of the two subunits of integration host factor, a specific DNA-binding protein that functions in genetic recombination as well as in transcriptional and translational control.</text>
</comment>
<comment type="subunit">
    <text evidence="1">Heterodimer of an alpha and a beta chain.</text>
</comment>
<comment type="similarity">
    <text evidence="1">Belongs to the bacterial histone-like protein family.</text>
</comment>
<name>IHFB_SHESH</name>
<keyword id="KW-0233">DNA recombination</keyword>
<keyword id="KW-0238">DNA-binding</keyword>
<keyword id="KW-1185">Reference proteome</keyword>
<keyword id="KW-0804">Transcription</keyword>
<keyword id="KW-0805">Transcription regulation</keyword>
<keyword id="KW-0810">Translation regulation</keyword>
<gene>
    <name evidence="1" type="primary">ihfB</name>
    <name evidence="1" type="synonym">himD</name>
    <name type="ordered locus">Ssed_2297</name>
</gene>
<dbReference type="EMBL" id="CP000821">
    <property type="protein sequence ID" value="ABV36906.1"/>
    <property type="molecule type" value="Genomic_DNA"/>
</dbReference>
<dbReference type="RefSeq" id="WP_012142641.1">
    <property type="nucleotide sequence ID" value="NC_009831.1"/>
</dbReference>
<dbReference type="SMR" id="A8FVN3"/>
<dbReference type="STRING" id="425104.Ssed_2297"/>
<dbReference type="KEGG" id="sse:Ssed_2297"/>
<dbReference type="eggNOG" id="COG0776">
    <property type="taxonomic scope" value="Bacteria"/>
</dbReference>
<dbReference type="HOGENOM" id="CLU_105066_2_0_6"/>
<dbReference type="OrthoDB" id="9804203at2"/>
<dbReference type="Proteomes" id="UP000002015">
    <property type="component" value="Chromosome"/>
</dbReference>
<dbReference type="GO" id="GO:0005694">
    <property type="term" value="C:chromosome"/>
    <property type="evidence" value="ECO:0007669"/>
    <property type="project" value="InterPro"/>
</dbReference>
<dbReference type="GO" id="GO:0005829">
    <property type="term" value="C:cytosol"/>
    <property type="evidence" value="ECO:0007669"/>
    <property type="project" value="TreeGrafter"/>
</dbReference>
<dbReference type="GO" id="GO:0003677">
    <property type="term" value="F:DNA binding"/>
    <property type="evidence" value="ECO:0007669"/>
    <property type="project" value="UniProtKB-UniRule"/>
</dbReference>
<dbReference type="GO" id="GO:0030527">
    <property type="term" value="F:structural constituent of chromatin"/>
    <property type="evidence" value="ECO:0007669"/>
    <property type="project" value="InterPro"/>
</dbReference>
<dbReference type="GO" id="GO:0006310">
    <property type="term" value="P:DNA recombination"/>
    <property type="evidence" value="ECO:0007669"/>
    <property type="project" value="UniProtKB-UniRule"/>
</dbReference>
<dbReference type="GO" id="GO:0006355">
    <property type="term" value="P:regulation of DNA-templated transcription"/>
    <property type="evidence" value="ECO:0007669"/>
    <property type="project" value="UniProtKB-UniRule"/>
</dbReference>
<dbReference type="GO" id="GO:0006417">
    <property type="term" value="P:regulation of translation"/>
    <property type="evidence" value="ECO:0007669"/>
    <property type="project" value="UniProtKB-UniRule"/>
</dbReference>
<dbReference type="CDD" id="cd13836">
    <property type="entry name" value="IHF_B"/>
    <property type="match status" value="1"/>
</dbReference>
<dbReference type="FunFam" id="4.10.520.10:FF:000003">
    <property type="entry name" value="Integration host factor subunit beta"/>
    <property type="match status" value="1"/>
</dbReference>
<dbReference type="Gene3D" id="4.10.520.10">
    <property type="entry name" value="IHF-like DNA-binding proteins"/>
    <property type="match status" value="1"/>
</dbReference>
<dbReference type="HAMAP" id="MF_00381">
    <property type="entry name" value="IHF_beta"/>
    <property type="match status" value="1"/>
</dbReference>
<dbReference type="InterPro" id="IPR000119">
    <property type="entry name" value="Hist_DNA-bd"/>
</dbReference>
<dbReference type="InterPro" id="IPR020816">
    <property type="entry name" value="Histone-like_DNA-bd_CS"/>
</dbReference>
<dbReference type="InterPro" id="IPR010992">
    <property type="entry name" value="IHF-like_DNA-bd_dom_sf"/>
</dbReference>
<dbReference type="InterPro" id="IPR005685">
    <property type="entry name" value="IHF_beta"/>
</dbReference>
<dbReference type="NCBIfam" id="TIGR00988">
    <property type="entry name" value="hip"/>
    <property type="match status" value="1"/>
</dbReference>
<dbReference type="NCBIfam" id="NF001222">
    <property type="entry name" value="PRK00199.1"/>
    <property type="match status" value="1"/>
</dbReference>
<dbReference type="PANTHER" id="PTHR33175">
    <property type="entry name" value="DNA-BINDING PROTEIN HU"/>
    <property type="match status" value="1"/>
</dbReference>
<dbReference type="PANTHER" id="PTHR33175:SF5">
    <property type="entry name" value="INTEGRATION HOST FACTOR SUBUNIT BETA"/>
    <property type="match status" value="1"/>
</dbReference>
<dbReference type="Pfam" id="PF00216">
    <property type="entry name" value="Bac_DNA_binding"/>
    <property type="match status" value="1"/>
</dbReference>
<dbReference type="PRINTS" id="PR01727">
    <property type="entry name" value="DNABINDINGHU"/>
</dbReference>
<dbReference type="SMART" id="SM00411">
    <property type="entry name" value="BHL"/>
    <property type="match status" value="1"/>
</dbReference>
<dbReference type="SUPFAM" id="SSF47729">
    <property type="entry name" value="IHF-like DNA-binding proteins"/>
    <property type="match status" value="1"/>
</dbReference>
<dbReference type="PROSITE" id="PS00045">
    <property type="entry name" value="HISTONE_LIKE"/>
    <property type="match status" value="1"/>
</dbReference>